<keyword id="KW-0066">ATP synthesis</keyword>
<keyword id="KW-0067">ATP-binding</keyword>
<keyword id="KW-0139">CF(1)</keyword>
<keyword id="KW-0150">Chloroplast</keyword>
<keyword id="KW-0375">Hydrogen ion transport</keyword>
<keyword id="KW-0406">Ion transport</keyword>
<keyword id="KW-0472">Membrane</keyword>
<keyword id="KW-0547">Nucleotide-binding</keyword>
<keyword id="KW-0934">Plastid</keyword>
<keyword id="KW-0793">Thylakoid</keyword>
<keyword id="KW-1278">Translocase</keyword>
<keyword id="KW-0813">Transport</keyword>
<proteinExistence type="inferred from homology"/>
<gene>
    <name evidence="1" type="primary">atpB</name>
</gene>
<geneLocation type="chloroplast"/>
<name>ATPB_CONMJ</name>
<organism>
    <name type="scientific">Convallaria majalis</name>
    <name type="common">Lily of the valley</name>
    <dbReference type="NCBI Taxonomy" id="32189"/>
    <lineage>
        <taxon>Eukaryota</taxon>
        <taxon>Viridiplantae</taxon>
        <taxon>Streptophyta</taxon>
        <taxon>Embryophyta</taxon>
        <taxon>Tracheophyta</taxon>
        <taxon>Spermatophyta</taxon>
        <taxon>Magnoliopsida</taxon>
        <taxon>Liliopsida</taxon>
        <taxon>Asparagales</taxon>
        <taxon>Asparagaceae</taxon>
        <taxon>Nolinoideae</taxon>
        <taxon>Convallaria</taxon>
    </lineage>
</organism>
<dbReference type="EC" id="7.1.2.2" evidence="1"/>
<dbReference type="EMBL" id="AF168897">
    <property type="protein sequence ID" value="AAD50839.1"/>
    <property type="molecule type" value="Genomic_DNA"/>
</dbReference>
<dbReference type="SMR" id="Q9TMU1"/>
<dbReference type="GO" id="GO:0009535">
    <property type="term" value="C:chloroplast thylakoid membrane"/>
    <property type="evidence" value="ECO:0007669"/>
    <property type="project" value="UniProtKB-SubCell"/>
</dbReference>
<dbReference type="GO" id="GO:0005739">
    <property type="term" value="C:mitochondrion"/>
    <property type="evidence" value="ECO:0007669"/>
    <property type="project" value="GOC"/>
</dbReference>
<dbReference type="GO" id="GO:0045259">
    <property type="term" value="C:proton-transporting ATP synthase complex"/>
    <property type="evidence" value="ECO:0007669"/>
    <property type="project" value="UniProtKB-KW"/>
</dbReference>
<dbReference type="GO" id="GO:0005524">
    <property type="term" value="F:ATP binding"/>
    <property type="evidence" value="ECO:0007669"/>
    <property type="project" value="UniProtKB-UniRule"/>
</dbReference>
<dbReference type="GO" id="GO:0016887">
    <property type="term" value="F:ATP hydrolysis activity"/>
    <property type="evidence" value="ECO:0007669"/>
    <property type="project" value="InterPro"/>
</dbReference>
<dbReference type="GO" id="GO:0046933">
    <property type="term" value="F:proton-transporting ATP synthase activity, rotational mechanism"/>
    <property type="evidence" value="ECO:0007669"/>
    <property type="project" value="UniProtKB-UniRule"/>
</dbReference>
<dbReference type="GO" id="GO:0042776">
    <property type="term" value="P:proton motive force-driven mitochondrial ATP synthesis"/>
    <property type="evidence" value="ECO:0007669"/>
    <property type="project" value="TreeGrafter"/>
</dbReference>
<dbReference type="CDD" id="cd18110">
    <property type="entry name" value="ATP-synt_F1_beta_C"/>
    <property type="match status" value="1"/>
</dbReference>
<dbReference type="CDD" id="cd18115">
    <property type="entry name" value="ATP-synt_F1_beta_N"/>
    <property type="match status" value="1"/>
</dbReference>
<dbReference type="CDD" id="cd01133">
    <property type="entry name" value="F1-ATPase_beta_CD"/>
    <property type="match status" value="1"/>
</dbReference>
<dbReference type="FunFam" id="1.10.1140.10:FF:000001">
    <property type="entry name" value="ATP synthase subunit beta"/>
    <property type="match status" value="1"/>
</dbReference>
<dbReference type="FunFam" id="3.40.50.12240:FF:000006">
    <property type="entry name" value="ATP synthase subunit beta"/>
    <property type="match status" value="1"/>
</dbReference>
<dbReference type="FunFam" id="3.40.50.300:FF:000004">
    <property type="entry name" value="ATP synthase subunit beta"/>
    <property type="match status" value="1"/>
</dbReference>
<dbReference type="FunFam" id="2.40.10.170:FF:000002">
    <property type="entry name" value="ATP synthase subunit beta, chloroplastic"/>
    <property type="match status" value="1"/>
</dbReference>
<dbReference type="Gene3D" id="2.40.10.170">
    <property type="match status" value="1"/>
</dbReference>
<dbReference type="Gene3D" id="1.10.1140.10">
    <property type="entry name" value="Bovine Mitochondrial F1-atpase, Atp Synthase Beta Chain, Chain D, domain 3"/>
    <property type="match status" value="1"/>
</dbReference>
<dbReference type="Gene3D" id="3.40.50.300">
    <property type="entry name" value="P-loop containing nucleotide triphosphate hydrolases"/>
    <property type="match status" value="1"/>
</dbReference>
<dbReference type="HAMAP" id="MF_01347">
    <property type="entry name" value="ATP_synth_beta_bact"/>
    <property type="match status" value="1"/>
</dbReference>
<dbReference type="InterPro" id="IPR003593">
    <property type="entry name" value="AAA+_ATPase"/>
</dbReference>
<dbReference type="InterPro" id="IPR055190">
    <property type="entry name" value="ATP-synt_VA_C"/>
</dbReference>
<dbReference type="InterPro" id="IPR005722">
    <property type="entry name" value="ATP_synth_F1_bsu"/>
</dbReference>
<dbReference type="InterPro" id="IPR020003">
    <property type="entry name" value="ATPase_a/bsu_AS"/>
</dbReference>
<dbReference type="InterPro" id="IPR050053">
    <property type="entry name" value="ATPase_alpha/beta_chains"/>
</dbReference>
<dbReference type="InterPro" id="IPR004100">
    <property type="entry name" value="ATPase_F1/V1/A1_a/bsu_N"/>
</dbReference>
<dbReference type="InterPro" id="IPR036121">
    <property type="entry name" value="ATPase_F1/V1/A1_a/bsu_N_sf"/>
</dbReference>
<dbReference type="InterPro" id="IPR000194">
    <property type="entry name" value="ATPase_F1/V1/A1_a/bsu_nucl-bd"/>
</dbReference>
<dbReference type="InterPro" id="IPR024034">
    <property type="entry name" value="ATPase_F1/V1_b/a_C"/>
</dbReference>
<dbReference type="InterPro" id="IPR027417">
    <property type="entry name" value="P-loop_NTPase"/>
</dbReference>
<dbReference type="NCBIfam" id="TIGR01039">
    <property type="entry name" value="atpD"/>
    <property type="match status" value="1"/>
</dbReference>
<dbReference type="PANTHER" id="PTHR15184">
    <property type="entry name" value="ATP SYNTHASE"/>
    <property type="match status" value="1"/>
</dbReference>
<dbReference type="PANTHER" id="PTHR15184:SF71">
    <property type="entry name" value="ATP SYNTHASE SUBUNIT BETA, MITOCHONDRIAL"/>
    <property type="match status" value="1"/>
</dbReference>
<dbReference type="Pfam" id="PF00006">
    <property type="entry name" value="ATP-synt_ab"/>
    <property type="match status" value="1"/>
</dbReference>
<dbReference type="Pfam" id="PF02874">
    <property type="entry name" value="ATP-synt_ab_N"/>
    <property type="match status" value="1"/>
</dbReference>
<dbReference type="Pfam" id="PF22919">
    <property type="entry name" value="ATP-synt_VA_C"/>
    <property type="match status" value="1"/>
</dbReference>
<dbReference type="SMART" id="SM00382">
    <property type="entry name" value="AAA"/>
    <property type="match status" value="1"/>
</dbReference>
<dbReference type="SUPFAM" id="SSF47917">
    <property type="entry name" value="C-terminal domain of alpha and beta subunits of F1 ATP synthase"/>
    <property type="match status" value="1"/>
</dbReference>
<dbReference type="SUPFAM" id="SSF50615">
    <property type="entry name" value="N-terminal domain of alpha and beta subunits of F1 ATP synthase"/>
    <property type="match status" value="1"/>
</dbReference>
<dbReference type="SUPFAM" id="SSF52540">
    <property type="entry name" value="P-loop containing nucleoside triphosphate hydrolases"/>
    <property type="match status" value="1"/>
</dbReference>
<dbReference type="PROSITE" id="PS00152">
    <property type="entry name" value="ATPASE_ALPHA_BETA"/>
    <property type="match status" value="1"/>
</dbReference>
<accession>Q9TMU1</accession>
<comment type="function">
    <text evidence="1">Produces ATP from ADP in the presence of a proton gradient across the membrane. The catalytic sites are hosted primarily by the beta subunits.</text>
</comment>
<comment type="catalytic activity">
    <reaction evidence="1">
        <text>ATP + H2O + 4 H(+)(in) = ADP + phosphate + 5 H(+)(out)</text>
        <dbReference type="Rhea" id="RHEA:57720"/>
        <dbReference type="ChEBI" id="CHEBI:15377"/>
        <dbReference type="ChEBI" id="CHEBI:15378"/>
        <dbReference type="ChEBI" id="CHEBI:30616"/>
        <dbReference type="ChEBI" id="CHEBI:43474"/>
        <dbReference type="ChEBI" id="CHEBI:456216"/>
        <dbReference type="EC" id="7.1.2.2"/>
    </reaction>
</comment>
<comment type="subunit">
    <text evidence="1">F-type ATPases have 2 components, CF(1) - the catalytic core - and CF(0) - the membrane proton channel. CF(1) has five subunits: alpha(3), beta(3), gamma(1), delta(1), epsilon(1). CF(0) has four main subunits: a(1), b(1), b'(1) and c(9-12).</text>
</comment>
<comment type="subcellular location">
    <subcellularLocation>
        <location evidence="1">Plastid</location>
        <location evidence="1">Chloroplast thylakoid membrane</location>
        <topology evidence="1">Peripheral membrane protein</topology>
    </subcellularLocation>
</comment>
<comment type="similarity">
    <text evidence="1">Belongs to the ATPase alpha/beta chains family.</text>
</comment>
<evidence type="ECO:0000255" key="1">
    <source>
        <dbReference type="HAMAP-Rule" id="MF_01347"/>
    </source>
</evidence>
<protein>
    <recommendedName>
        <fullName evidence="1">ATP synthase subunit beta, chloroplastic</fullName>
        <ecNumber evidence="1">7.1.2.2</ecNumber>
    </recommendedName>
    <alternativeName>
        <fullName evidence="1">ATP synthase F1 sector subunit beta</fullName>
    </alternativeName>
    <alternativeName>
        <fullName evidence="1">F-ATPase subunit beta</fullName>
    </alternativeName>
</protein>
<feature type="chain" id="PRO_0000254463" description="ATP synthase subunit beta, chloroplastic">
    <location>
        <begin position="1"/>
        <end position="495"/>
    </location>
</feature>
<feature type="binding site" evidence="1">
    <location>
        <begin position="172"/>
        <end position="179"/>
    </location>
    <ligand>
        <name>ATP</name>
        <dbReference type="ChEBI" id="CHEBI:30616"/>
    </ligand>
</feature>
<reference key="1">
    <citation type="submission" date="1999-07" db="EMBL/GenBank/DDBJ databases">
        <title>Molecular sequence phylogenetics of the Monocots.</title>
        <authorList>
            <person name="Hahn W.J."/>
        </authorList>
    </citation>
    <scope>NUCLEOTIDE SEQUENCE [GENOMIC DNA]</scope>
</reference>
<sequence length="495" mass="53206">MRTNPTTSGPAVSTLDEKNLGRIAQIIGPVLDVVFPPGKMPNIYNALVVKGRDTVGQQINVTCEVQQLLGNNRVRAVAMSATDGLTRGMEVIDTGAPLSVPVGGATLGRIFNVLGEPVDNLGPVDTRTTSPIHRSGPAFIQLDTKFSIFETGIKVVDLLAPYRRGGKIGLFGGAGVGKTVLIMELINNIAKAHGGVSVFGGVGERTREGNDLYMEMKESGVINEKNIAESKVALVYGQMNEPPGARMRVGLTALTMAEYFRDVNEQDVLLFIDNIFRFVQAGSEVSALLGRMPSAVGYQPTLSTEMGSLQERITSTKEGSITSIQAVYVPADDLTDPAPATTFAHLDATTVLSRGLAAKGIYPAVDPLDSTSTMLQPGIVGEEHYETAQKVKQTLQRYKELQDIIAILGLDELSEEDRLTVARARKIERFLSQPFFVAEVFTGSPGKYVGLAETVRGFQLILSGELDSLPEQAFYLVGNIDEATAKAMNLEGEKK</sequence>